<evidence type="ECO:0000303" key="1">
    <source>
    </source>
</evidence>
<evidence type="ECO:0000305" key="2"/>
<sequence length="21" mass="2328">LDTDLQGTMPEVYASERAAFL</sequence>
<comment type="function">
    <text evidence="2">The S-layer is a paracrystalline mono-layered assembly of proteins which coat the surface of bacteria.</text>
</comment>
<comment type="subcellular location">
    <subcellularLocation>
        <location>Secreted</location>
        <location>Cell wall</location>
        <location>S-layer</location>
    </subcellularLocation>
</comment>
<comment type="caution">
    <text evidence="2">The order of the peptides shown is unknown.</text>
</comment>
<organism>
    <name type="scientific">Bacillus thuringiensis subsp. konkukian</name>
    <dbReference type="NCBI Taxonomy" id="180856"/>
    <lineage>
        <taxon>Bacteria</taxon>
        <taxon>Bacillati</taxon>
        <taxon>Bacillota</taxon>
        <taxon>Bacilli</taxon>
        <taxon>Bacillales</taxon>
        <taxon>Bacillaceae</taxon>
        <taxon>Bacillus</taxon>
        <taxon>Bacillus cereus group</taxon>
    </lineage>
</organism>
<reference evidence="2" key="1">
    <citation type="journal article" date="2006" name="Proteomics">
        <title>Mass spectrometric sequencing of endotoxin proteins of Bacillus thuringiensis ssp. konkukian extracted from polyacrylamide gels.</title>
        <authorList>
            <person name="Lee K.Y."/>
            <person name="Kang E.Y."/>
            <person name="Park S."/>
            <person name="Ahn S.K."/>
            <person name="Yoo K.H."/>
            <person name="Kim J.Y."/>
            <person name="Lee H.H."/>
        </authorList>
    </citation>
    <scope>PROTEIN SEQUENCE</scope>
</reference>
<proteinExistence type="evidence at protein level"/>
<name>SLAP2_BACHU</name>
<keyword id="KW-0134">Cell wall</keyword>
<keyword id="KW-0903">Direct protein sequencing</keyword>
<keyword id="KW-0701">S-layer</keyword>
<keyword id="KW-0964">Secreted</keyword>
<accession>P85110</accession>
<protein>
    <recommendedName>
        <fullName>S-layer protein 2</fullName>
    </recommendedName>
    <alternativeName>
        <fullName>55 KDa parasporal endotoxin</fullName>
    </alternativeName>
</protein>
<dbReference type="GO" id="GO:0005576">
    <property type="term" value="C:extracellular region"/>
    <property type="evidence" value="ECO:0007669"/>
    <property type="project" value="UniProtKB-KW"/>
</dbReference>
<dbReference type="GO" id="GO:0030115">
    <property type="term" value="C:S-layer"/>
    <property type="evidence" value="ECO:0007669"/>
    <property type="project" value="UniProtKB-SubCell"/>
</dbReference>
<dbReference type="GO" id="GO:0031160">
    <property type="term" value="C:spore wall"/>
    <property type="evidence" value="ECO:0000314"/>
    <property type="project" value="UniProtKB"/>
</dbReference>
<feature type="chain" id="PRO_0000284769" description="S-layer protein 2">
    <location>
        <begin position="1" status="less than"/>
        <end position="21" status="greater than"/>
    </location>
</feature>
<feature type="non-consecutive residues" evidence="1">
    <location>
        <begin position="4"/>
        <end position="5"/>
    </location>
</feature>
<feature type="non-consecutive residues" evidence="1">
    <location>
        <begin position="9"/>
        <end position="10"/>
    </location>
</feature>
<feature type="non-consecutive residues" evidence="1">
    <location>
        <begin position="16"/>
        <end position="17"/>
    </location>
</feature>
<feature type="non-terminal residue" evidence="1">
    <location>
        <position position="1"/>
    </location>
</feature>
<feature type="non-terminal residue" evidence="1">
    <location>
        <position position="21"/>
    </location>
</feature>